<proteinExistence type="inferred from homology"/>
<keyword id="KW-1003">Cell membrane</keyword>
<keyword id="KW-0472">Membrane</keyword>
<keyword id="KW-0552">Olfaction</keyword>
<keyword id="KW-0675">Receptor</keyword>
<keyword id="KW-1185">Reference proteome</keyword>
<keyword id="KW-0716">Sensory transduction</keyword>
<keyword id="KW-0807">Transducer</keyword>
<keyword id="KW-0812">Transmembrane</keyword>
<keyword id="KW-1133">Transmembrane helix</keyword>
<evidence type="ECO:0000250" key="1"/>
<evidence type="ECO:0000255" key="2"/>
<evidence type="ECO:0000269" key="3">
    <source>
    </source>
</evidence>
<evidence type="ECO:0000269" key="4">
    <source>
    </source>
</evidence>
<evidence type="ECO:0000305" key="5"/>
<sequence>MSFHRYRPRLPGGELAPMPWPVSLYRVLNHVAWPLEAESGRWTVFLDRLMIFLGFLVFCEHNEVDFHYLIANRQDMDNMLTGLPTYLILVEMQIRCFQLAWHKDRFRALLQRFYAEIYVSEEMEPHLFASIQRQMLATRVNSTVYLLALLNFFLVPVTNVIYHRREMLYKQVYPFDNTQLHFFIPLLVLNFWVGFIITSMLFGELNVMGELMMHLNARYIQLGQDLRRSAQMLLKKSSSLNVAIAYRLNLTHILRRNAALRDFGQRVEKEFTLRIFVMFAFSAGLLCALFFKAFTNPWGNVAYIVWFLAKFMELLALGMLGSILLKTTDELGMMYYTADWEQVIHQSDNVGENVKLMKLVTLAIQLNSRPFFITGLNYFRVSLTAVLKIIQGAFSYFTFLNSMR</sequence>
<reference key="1">
    <citation type="journal article" date="2000" name="Science">
        <title>The genome sequence of Drosophila melanogaster.</title>
        <authorList>
            <person name="Adams M.D."/>
            <person name="Celniker S.E."/>
            <person name="Holt R.A."/>
            <person name="Evans C.A."/>
            <person name="Gocayne J.D."/>
            <person name="Amanatides P.G."/>
            <person name="Scherer S.E."/>
            <person name="Li P.W."/>
            <person name="Hoskins R.A."/>
            <person name="Galle R.F."/>
            <person name="George R.A."/>
            <person name="Lewis S.E."/>
            <person name="Richards S."/>
            <person name="Ashburner M."/>
            <person name="Henderson S.N."/>
            <person name="Sutton G.G."/>
            <person name="Wortman J.R."/>
            <person name="Yandell M.D."/>
            <person name="Zhang Q."/>
            <person name="Chen L.X."/>
            <person name="Brandon R.C."/>
            <person name="Rogers Y.-H.C."/>
            <person name="Blazej R.G."/>
            <person name="Champe M."/>
            <person name="Pfeiffer B.D."/>
            <person name="Wan K.H."/>
            <person name="Doyle C."/>
            <person name="Baxter E.G."/>
            <person name="Helt G."/>
            <person name="Nelson C.R."/>
            <person name="Miklos G.L.G."/>
            <person name="Abril J.F."/>
            <person name="Agbayani A."/>
            <person name="An H.-J."/>
            <person name="Andrews-Pfannkoch C."/>
            <person name="Baldwin D."/>
            <person name="Ballew R.M."/>
            <person name="Basu A."/>
            <person name="Baxendale J."/>
            <person name="Bayraktaroglu L."/>
            <person name="Beasley E.M."/>
            <person name="Beeson K.Y."/>
            <person name="Benos P.V."/>
            <person name="Berman B.P."/>
            <person name="Bhandari D."/>
            <person name="Bolshakov S."/>
            <person name="Borkova D."/>
            <person name="Botchan M.R."/>
            <person name="Bouck J."/>
            <person name="Brokstein P."/>
            <person name="Brottier P."/>
            <person name="Burtis K.C."/>
            <person name="Busam D.A."/>
            <person name="Butler H."/>
            <person name="Cadieu E."/>
            <person name="Center A."/>
            <person name="Chandra I."/>
            <person name="Cherry J.M."/>
            <person name="Cawley S."/>
            <person name="Dahlke C."/>
            <person name="Davenport L.B."/>
            <person name="Davies P."/>
            <person name="de Pablos B."/>
            <person name="Delcher A."/>
            <person name="Deng Z."/>
            <person name="Mays A.D."/>
            <person name="Dew I."/>
            <person name="Dietz S.M."/>
            <person name="Dodson K."/>
            <person name="Doup L.E."/>
            <person name="Downes M."/>
            <person name="Dugan-Rocha S."/>
            <person name="Dunkov B.C."/>
            <person name="Dunn P."/>
            <person name="Durbin K.J."/>
            <person name="Evangelista C.C."/>
            <person name="Ferraz C."/>
            <person name="Ferriera S."/>
            <person name="Fleischmann W."/>
            <person name="Fosler C."/>
            <person name="Gabrielian A.E."/>
            <person name="Garg N.S."/>
            <person name="Gelbart W.M."/>
            <person name="Glasser K."/>
            <person name="Glodek A."/>
            <person name="Gong F."/>
            <person name="Gorrell J.H."/>
            <person name="Gu Z."/>
            <person name="Guan P."/>
            <person name="Harris M."/>
            <person name="Harris N.L."/>
            <person name="Harvey D.A."/>
            <person name="Heiman T.J."/>
            <person name="Hernandez J.R."/>
            <person name="Houck J."/>
            <person name="Hostin D."/>
            <person name="Houston K.A."/>
            <person name="Howland T.J."/>
            <person name="Wei M.-H."/>
            <person name="Ibegwam C."/>
            <person name="Jalali M."/>
            <person name="Kalush F."/>
            <person name="Karpen G.H."/>
            <person name="Ke Z."/>
            <person name="Kennison J.A."/>
            <person name="Ketchum K.A."/>
            <person name="Kimmel B.E."/>
            <person name="Kodira C.D."/>
            <person name="Kraft C.L."/>
            <person name="Kravitz S."/>
            <person name="Kulp D."/>
            <person name="Lai Z."/>
            <person name="Lasko P."/>
            <person name="Lei Y."/>
            <person name="Levitsky A.A."/>
            <person name="Li J.H."/>
            <person name="Li Z."/>
            <person name="Liang Y."/>
            <person name="Lin X."/>
            <person name="Liu X."/>
            <person name="Mattei B."/>
            <person name="McIntosh T.C."/>
            <person name="McLeod M.P."/>
            <person name="McPherson D."/>
            <person name="Merkulov G."/>
            <person name="Milshina N.V."/>
            <person name="Mobarry C."/>
            <person name="Morris J."/>
            <person name="Moshrefi A."/>
            <person name="Mount S.M."/>
            <person name="Moy M."/>
            <person name="Murphy B."/>
            <person name="Murphy L."/>
            <person name="Muzny D.M."/>
            <person name="Nelson D.L."/>
            <person name="Nelson D.R."/>
            <person name="Nelson K.A."/>
            <person name="Nixon K."/>
            <person name="Nusskern D.R."/>
            <person name="Pacleb J.M."/>
            <person name="Palazzolo M."/>
            <person name="Pittman G.S."/>
            <person name="Pan S."/>
            <person name="Pollard J."/>
            <person name="Puri V."/>
            <person name="Reese M.G."/>
            <person name="Reinert K."/>
            <person name="Remington K."/>
            <person name="Saunders R.D.C."/>
            <person name="Scheeler F."/>
            <person name="Shen H."/>
            <person name="Shue B.C."/>
            <person name="Siden-Kiamos I."/>
            <person name="Simpson M."/>
            <person name="Skupski M.P."/>
            <person name="Smith T.J."/>
            <person name="Spier E."/>
            <person name="Spradling A.C."/>
            <person name="Stapleton M."/>
            <person name="Strong R."/>
            <person name="Sun E."/>
            <person name="Svirskas R."/>
            <person name="Tector C."/>
            <person name="Turner R."/>
            <person name="Venter E."/>
            <person name="Wang A.H."/>
            <person name="Wang X."/>
            <person name="Wang Z.-Y."/>
            <person name="Wassarman D.A."/>
            <person name="Weinstock G.M."/>
            <person name="Weissenbach J."/>
            <person name="Williams S.M."/>
            <person name="Woodage T."/>
            <person name="Worley K.C."/>
            <person name="Wu D."/>
            <person name="Yang S."/>
            <person name="Yao Q.A."/>
            <person name="Ye J."/>
            <person name="Yeh R.-F."/>
            <person name="Zaveri J.S."/>
            <person name="Zhan M."/>
            <person name="Zhang G."/>
            <person name="Zhao Q."/>
            <person name="Zheng L."/>
            <person name="Zheng X.H."/>
            <person name="Zhong F.N."/>
            <person name="Zhong W."/>
            <person name="Zhou X."/>
            <person name="Zhu S.C."/>
            <person name="Zhu X."/>
            <person name="Smith H.O."/>
            <person name="Gibbs R.A."/>
            <person name="Myers E.W."/>
            <person name="Rubin G.M."/>
            <person name="Venter J.C."/>
        </authorList>
    </citation>
    <scope>NUCLEOTIDE SEQUENCE [LARGE SCALE GENOMIC DNA]</scope>
    <source>
        <strain>Berkeley</strain>
    </source>
</reference>
<reference key="2">
    <citation type="journal article" date="2002" name="Genome Biol.">
        <title>Annotation of the Drosophila melanogaster euchromatic genome: a systematic review.</title>
        <authorList>
            <person name="Misra S."/>
            <person name="Crosby M.A."/>
            <person name="Mungall C.J."/>
            <person name="Matthews B.B."/>
            <person name="Campbell K.S."/>
            <person name="Hradecky P."/>
            <person name="Huang Y."/>
            <person name="Kaminker J.S."/>
            <person name="Millburn G.H."/>
            <person name="Prochnik S.E."/>
            <person name="Smith C.D."/>
            <person name="Tupy J.L."/>
            <person name="Whitfield E.J."/>
            <person name="Bayraktaroglu L."/>
            <person name="Berman B.P."/>
            <person name="Bettencourt B.R."/>
            <person name="Celniker S.E."/>
            <person name="de Grey A.D.N.J."/>
            <person name="Drysdale R.A."/>
            <person name="Harris N.L."/>
            <person name="Richter J."/>
            <person name="Russo S."/>
            <person name="Schroeder A.J."/>
            <person name="Shu S.Q."/>
            <person name="Stapleton M."/>
            <person name="Yamada C."/>
            <person name="Ashburner M."/>
            <person name="Gelbart W.M."/>
            <person name="Rubin G.M."/>
            <person name="Lewis S.E."/>
        </authorList>
    </citation>
    <scope>GENOME REANNOTATION</scope>
    <source>
        <strain>Berkeley</strain>
    </source>
</reference>
<reference key="3">
    <citation type="journal article" date="2011" name="J. Neurosci.">
        <title>Similar odorants elicit different behavioral and physiological responses, some supersustained.</title>
        <authorList>
            <person name="Montague S.A."/>
            <person name="Mathew D."/>
            <person name="Carlson J.R."/>
        </authorList>
    </citation>
    <scope>FUNCTION</scope>
</reference>
<reference key="4">
    <citation type="journal article" date="2011" name="PLoS ONE">
        <title>Modeling peripheral olfactory coding in Drosophila larvae.</title>
        <authorList>
            <person name="Hoare D.J."/>
            <person name="Humble J."/>
            <person name="Jin D."/>
            <person name="Gilding N."/>
            <person name="Petersen R."/>
            <person name="Cobb M."/>
            <person name="McCrohan C."/>
        </authorList>
    </citation>
    <scope>FUNCTION</scope>
</reference>
<organism>
    <name type="scientific">Drosophila melanogaster</name>
    <name type="common">Fruit fly</name>
    <dbReference type="NCBI Taxonomy" id="7227"/>
    <lineage>
        <taxon>Eukaryota</taxon>
        <taxon>Metazoa</taxon>
        <taxon>Ecdysozoa</taxon>
        <taxon>Arthropoda</taxon>
        <taxon>Hexapoda</taxon>
        <taxon>Insecta</taxon>
        <taxon>Pterygota</taxon>
        <taxon>Neoptera</taxon>
        <taxon>Endopterygota</taxon>
        <taxon>Diptera</taxon>
        <taxon>Brachycera</taxon>
        <taxon>Muscomorpha</taxon>
        <taxon>Ephydroidea</taxon>
        <taxon>Drosophilidae</taxon>
        <taxon>Drosophila</taxon>
        <taxon>Sophophora</taxon>
    </lineage>
</organism>
<accession>Q9VVF3</accession>
<comment type="function">
    <text evidence="3 4">Odorant receptor which mediates acceptance or avoidance behavior, depending on its substrates. The odorant receptor repertoire encodes a large collection of odor stimuli that vary widely in identity, intensity, and duration. May form a complex with Orco to form odorant-sensing units, providing sensitive and prolonged odorant signaling and calcium permeability. Involved in the behavioral responses to octanol, anisole, and 2-heptanone.</text>
</comment>
<comment type="subunit">
    <text evidence="1">Interacts with Orco. Complexes exist early in the endomembrane system in olfactory sensory neurons (OSNs), coupling these complexes to the conserved ciliary trafficking pathway (By similarity).</text>
</comment>
<comment type="subcellular location">
    <subcellularLocation>
        <location evidence="1">Cell membrane</location>
        <topology evidence="1">Multi-pass membrane protein</topology>
    </subcellularLocation>
</comment>
<comment type="miscellaneous">
    <text>The atypical heteromeric and topological design of the odorant receptors appears to be an insect-specific solution for odor recognition, making the OR/Orco complex an attractive target for the development of highly selective insect repellents to disrupt olfactory-mediated host-seeking behaviors of insect disease vectors. Odor-evoked OR currents are independent of known G-protein-coupled second messenger pathways.</text>
</comment>
<comment type="similarity">
    <text evidence="5">Belongs to the insect chemoreceptor superfamily. Heteromeric odorant receptor channel (TC 1.A.69) family. Or1a subfamily.</text>
</comment>
<gene>
    <name type="primary">Or74a</name>
    <name type="ORF">CG13726</name>
</gene>
<feature type="chain" id="PRO_0000174269" description="Odorant receptor 74a">
    <location>
        <begin position="1"/>
        <end position="404"/>
    </location>
</feature>
<feature type="topological domain" description="Cytoplasmic" evidence="2">
    <location>
        <begin position="1"/>
        <end position="38"/>
    </location>
</feature>
<feature type="transmembrane region" description="Helical; Name=1" evidence="2">
    <location>
        <begin position="39"/>
        <end position="59"/>
    </location>
</feature>
<feature type="topological domain" description="Extracellular" evidence="2">
    <location>
        <begin position="60"/>
        <end position="67"/>
    </location>
</feature>
<feature type="transmembrane region" description="Helical; Name=2" evidence="2">
    <location>
        <begin position="68"/>
        <end position="88"/>
    </location>
</feature>
<feature type="topological domain" description="Cytoplasmic" evidence="2">
    <location>
        <begin position="89"/>
        <end position="141"/>
    </location>
</feature>
<feature type="transmembrane region" description="Helical; Name=3" evidence="2">
    <location>
        <begin position="142"/>
        <end position="162"/>
    </location>
</feature>
<feature type="topological domain" description="Extracellular" evidence="2">
    <location>
        <begin position="163"/>
        <end position="181"/>
    </location>
</feature>
<feature type="transmembrane region" description="Helical; Name=4" evidence="2">
    <location>
        <begin position="182"/>
        <end position="202"/>
    </location>
</feature>
<feature type="topological domain" description="Cytoplasmic" evidence="2">
    <location>
        <begin position="203"/>
        <end position="274"/>
    </location>
</feature>
<feature type="transmembrane region" description="Helical; Name=5" evidence="2">
    <location>
        <begin position="275"/>
        <end position="295"/>
    </location>
</feature>
<feature type="topological domain" description="Extracellular" evidence="2">
    <location>
        <begin position="296"/>
        <end position="303"/>
    </location>
</feature>
<feature type="transmembrane region" description="Helical; Name=6" evidence="2">
    <location>
        <begin position="304"/>
        <end position="324"/>
    </location>
</feature>
<feature type="topological domain" description="Cytoplasmic" evidence="2">
    <location>
        <begin position="325"/>
        <end position="380"/>
    </location>
</feature>
<feature type="transmembrane region" description="Helical; Name=7" evidence="2">
    <location>
        <begin position="381"/>
        <end position="401"/>
    </location>
</feature>
<feature type="topological domain" description="Extracellular" evidence="2">
    <location>
        <begin position="402"/>
        <end position="404"/>
    </location>
</feature>
<dbReference type="EMBL" id="AE014296">
    <property type="protein sequence ID" value="AAF49358.1"/>
    <property type="molecule type" value="Genomic_DNA"/>
</dbReference>
<dbReference type="RefSeq" id="NP_524123.1">
    <property type="nucleotide sequence ID" value="NM_079399.3"/>
</dbReference>
<dbReference type="SMR" id="Q9VVF3"/>
<dbReference type="BioGRID" id="65219">
    <property type="interactions" value="1"/>
</dbReference>
<dbReference type="DIP" id="DIP-21424N"/>
<dbReference type="FunCoup" id="Q9VVF3">
    <property type="interactions" value="7"/>
</dbReference>
<dbReference type="IntAct" id="Q9VVF3">
    <property type="interactions" value="1"/>
</dbReference>
<dbReference type="STRING" id="7227.FBpp0075008"/>
<dbReference type="PaxDb" id="7227-FBpp0075008"/>
<dbReference type="EnsemblMetazoa" id="FBtr0075247">
    <property type="protein sequence ID" value="FBpp0075008"/>
    <property type="gene ID" value="FBgn0036709"/>
</dbReference>
<dbReference type="GeneID" id="39929"/>
<dbReference type="KEGG" id="dme:Dmel_CG13726"/>
<dbReference type="AGR" id="FB:FBgn0036709"/>
<dbReference type="CTD" id="39929"/>
<dbReference type="FlyBase" id="FBgn0036709">
    <property type="gene designation" value="Or74a"/>
</dbReference>
<dbReference type="VEuPathDB" id="VectorBase:FBgn0036709"/>
<dbReference type="eggNOG" id="ENOG502T9IC">
    <property type="taxonomic scope" value="Eukaryota"/>
</dbReference>
<dbReference type="GeneTree" id="ENSGT00560000077544"/>
<dbReference type="HOGENOM" id="CLU_687484_0_0_1"/>
<dbReference type="InParanoid" id="Q9VVF3"/>
<dbReference type="OMA" id="VFCEHNE"/>
<dbReference type="OrthoDB" id="7845758at2759"/>
<dbReference type="PhylomeDB" id="Q9VVF3"/>
<dbReference type="BioGRID-ORCS" id="39929">
    <property type="hits" value="0 hits in 1 CRISPR screen"/>
</dbReference>
<dbReference type="GenomeRNAi" id="39929"/>
<dbReference type="PRO" id="PR:Q9VVF3"/>
<dbReference type="Proteomes" id="UP000000803">
    <property type="component" value="Chromosome 3L"/>
</dbReference>
<dbReference type="ExpressionAtlas" id="Q9VVF3">
    <property type="expression patterns" value="baseline and differential"/>
</dbReference>
<dbReference type="GO" id="GO:0034703">
    <property type="term" value="C:cation channel complex"/>
    <property type="evidence" value="ECO:0000250"/>
    <property type="project" value="FlyBase"/>
</dbReference>
<dbReference type="GO" id="GO:0032590">
    <property type="term" value="C:dendrite membrane"/>
    <property type="evidence" value="ECO:0000250"/>
    <property type="project" value="FlyBase"/>
</dbReference>
<dbReference type="GO" id="GO:0005886">
    <property type="term" value="C:plasma membrane"/>
    <property type="evidence" value="ECO:0000250"/>
    <property type="project" value="FlyBase"/>
</dbReference>
<dbReference type="GO" id="GO:0170020">
    <property type="term" value="F:ionotropic olfactory receptor activity"/>
    <property type="evidence" value="ECO:0000250"/>
    <property type="project" value="FlyBase"/>
</dbReference>
<dbReference type="GO" id="GO:0005549">
    <property type="term" value="F:odorant binding"/>
    <property type="evidence" value="ECO:0000250"/>
    <property type="project" value="FlyBase"/>
</dbReference>
<dbReference type="GO" id="GO:0004984">
    <property type="term" value="F:olfactory receptor activity"/>
    <property type="evidence" value="ECO:0000318"/>
    <property type="project" value="GO_Central"/>
</dbReference>
<dbReference type="GO" id="GO:0050911">
    <property type="term" value="P:detection of chemical stimulus involved in sensory perception of smell"/>
    <property type="evidence" value="ECO:0000315"/>
    <property type="project" value="FlyBase"/>
</dbReference>
<dbReference type="GO" id="GO:0007165">
    <property type="term" value="P:signal transduction"/>
    <property type="evidence" value="ECO:0007669"/>
    <property type="project" value="UniProtKB-KW"/>
</dbReference>
<dbReference type="InterPro" id="IPR004117">
    <property type="entry name" value="7tm6_olfct_rcpt"/>
</dbReference>
<dbReference type="PANTHER" id="PTHR21137">
    <property type="entry name" value="ODORANT RECEPTOR"/>
    <property type="match status" value="1"/>
</dbReference>
<dbReference type="PANTHER" id="PTHR21137:SF35">
    <property type="entry name" value="ODORANT RECEPTOR 19A-RELATED"/>
    <property type="match status" value="1"/>
</dbReference>
<dbReference type="Pfam" id="PF02949">
    <property type="entry name" value="7tm_6"/>
    <property type="match status" value="1"/>
</dbReference>
<protein>
    <recommendedName>
        <fullName>Odorant receptor 74a</fullName>
    </recommendedName>
</protein>
<name>OR74A_DROME</name>